<dbReference type="EC" id="3.2.2.27" evidence="1"/>
<dbReference type="EMBL" id="AP006716">
    <property type="protein sequence ID" value="BAE05720.1"/>
    <property type="molecule type" value="Genomic_DNA"/>
</dbReference>
<dbReference type="RefSeq" id="WP_011276666.1">
    <property type="nucleotide sequence ID" value="NC_007168.1"/>
</dbReference>
<dbReference type="SMR" id="Q4L3Q7"/>
<dbReference type="KEGG" id="sha:SH2411"/>
<dbReference type="eggNOG" id="COG0692">
    <property type="taxonomic scope" value="Bacteria"/>
</dbReference>
<dbReference type="HOGENOM" id="CLU_032162_3_1_9"/>
<dbReference type="OrthoDB" id="9804372at2"/>
<dbReference type="Proteomes" id="UP000000543">
    <property type="component" value="Chromosome"/>
</dbReference>
<dbReference type="GO" id="GO:0005737">
    <property type="term" value="C:cytoplasm"/>
    <property type="evidence" value="ECO:0007669"/>
    <property type="project" value="UniProtKB-SubCell"/>
</dbReference>
<dbReference type="GO" id="GO:0004844">
    <property type="term" value="F:uracil DNA N-glycosylase activity"/>
    <property type="evidence" value="ECO:0007669"/>
    <property type="project" value="UniProtKB-UniRule"/>
</dbReference>
<dbReference type="GO" id="GO:0097510">
    <property type="term" value="P:base-excision repair, AP site formation via deaminated base removal"/>
    <property type="evidence" value="ECO:0007669"/>
    <property type="project" value="TreeGrafter"/>
</dbReference>
<dbReference type="CDD" id="cd10027">
    <property type="entry name" value="UDG-F1-like"/>
    <property type="match status" value="1"/>
</dbReference>
<dbReference type="FunFam" id="3.40.470.10:FF:000001">
    <property type="entry name" value="Uracil-DNA glycosylase"/>
    <property type="match status" value="1"/>
</dbReference>
<dbReference type="Gene3D" id="3.40.470.10">
    <property type="entry name" value="Uracil-DNA glycosylase-like domain"/>
    <property type="match status" value="1"/>
</dbReference>
<dbReference type="HAMAP" id="MF_00148">
    <property type="entry name" value="UDG"/>
    <property type="match status" value="1"/>
</dbReference>
<dbReference type="InterPro" id="IPR002043">
    <property type="entry name" value="UDG_fam1"/>
</dbReference>
<dbReference type="InterPro" id="IPR018085">
    <property type="entry name" value="Ura-DNA_Glyclase_AS"/>
</dbReference>
<dbReference type="InterPro" id="IPR005122">
    <property type="entry name" value="Uracil-DNA_glycosylase-like"/>
</dbReference>
<dbReference type="InterPro" id="IPR036895">
    <property type="entry name" value="Uracil-DNA_glycosylase-like_sf"/>
</dbReference>
<dbReference type="NCBIfam" id="NF003588">
    <property type="entry name" value="PRK05254.1-1"/>
    <property type="match status" value="1"/>
</dbReference>
<dbReference type="NCBIfam" id="NF003589">
    <property type="entry name" value="PRK05254.1-2"/>
    <property type="match status" value="1"/>
</dbReference>
<dbReference type="NCBIfam" id="NF003591">
    <property type="entry name" value="PRK05254.1-4"/>
    <property type="match status" value="1"/>
</dbReference>
<dbReference type="NCBIfam" id="NF003592">
    <property type="entry name" value="PRK05254.1-5"/>
    <property type="match status" value="1"/>
</dbReference>
<dbReference type="NCBIfam" id="TIGR00628">
    <property type="entry name" value="ung"/>
    <property type="match status" value="1"/>
</dbReference>
<dbReference type="PANTHER" id="PTHR11264">
    <property type="entry name" value="URACIL-DNA GLYCOSYLASE"/>
    <property type="match status" value="1"/>
</dbReference>
<dbReference type="PANTHER" id="PTHR11264:SF0">
    <property type="entry name" value="URACIL-DNA GLYCOSYLASE"/>
    <property type="match status" value="1"/>
</dbReference>
<dbReference type="Pfam" id="PF03167">
    <property type="entry name" value="UDG"/>
    <property type="match status" value="1"/>
</dbReference>
<dbReference type="SMART" id="SM00986">
    <property type="entry name" value="UDG"/>
    <property type="match status" value="1"/>
</dbReference>
<dbReference type="SMART" id="SM00987">
    <property type="entry name" value="UreE_C"/>
    <property type="match status" value="1"/>
</dbReference>
<dbReference type="SUPFAM" id="SSF52141">
    <property type="entry name" value="Uracil-DNA glycosylase-like"/>
    <property type="match status" value="1"/>
</dbReference>
<dbReference type="PROSITE" id="PS00130">
    <property type="entry name" value="U_DNA_GLYCOSYLASE"/>
    <property type="match status" value="1"/>
</dbReference>
<accession>Q4L3Q7</accession>
<organism>
    <name type="scientific">Staphylococcus haemolyticus (strain JCSC1435)</name>
    <dbReference type="NCBI Taxonomy" id="279808"/>
    <lineage>
        <taxon>Bacteria</taxon>
        <taxon>Bacillati</taxon>
        <taxon>Bacillota</taxon>
        <taxon>Bacilli</taxon>
        <taxon>Bacillales</taxon>
        <taxon>Staphylococcaceae</taxon>
        <taxon>Staphylococcus</taxon>
    </lineage>
</organism>
<proteinExistence type="inferred from homology"/>
<protein>
    <recommendedName>
        <fullName evidence="1">Uracil-DNA glycosylase</fullName>
        <shortName evidence="1">UDG</shortName>
        <ecNumber evidence="1">3.2.2.27</ecNumber>
    </recommendedName>
</protein>
<name>UNG_STAHJ</name>
<evidence type="ECO:0000255" key="1">
    <source>
        <dbReference type="HAMAP-Rule" id="MF_00148"/>
    </source>
</evidence>
<sequence>MEWSEIFHDITERHDFKEMHDFLEKEYTTQTIYPDRDNIYQAFDLTPFEDVKVVILGQDPYHGPNQAHGLAFSVQPSAKFPPSLRNMYQELEDDIGCHRTSPHLQDWAREGVLLLNTVLTVRQGQAHSHKDIGWETFTDEVIQAISKYRDDVVFILWGKPAQQKIKLIDTSKHYIIKSPHPSPLSAYRGFFGSKPYSKTNDYLVSKGKSPINWCENGED</sequence>
<reference key="1">
    <citation type="journal article" date="2005" name="J. Bacteriol.">
        <title>Whole-genome sequencing of Staphylococcus haemolyticus uncovers the extreme plasticity of its genome and the evolution of human-colonizing staphylococcal species.</title>
        <authorList>
            <person name="Takeuchi F."/>
            <person name="Watanabe S."/>
            <person name="Baba T."/>
            <person name="Yuzawa H."/>
            <person name="Ito T."/>
            <person name="Morimoto Y."/>
            <person name="Kuroda M."/>
            <person name="Cui L."/>
            <person name="Takahashi M."/>
            <person name="Ankai A."/>
            <person name="Baba S."/>
            <person name="Fukui S."/>
            <person name="Lee J.C."/>
            <person name="Hiramatsu K."/>
        </authorList>
    </citation>
    <scope>NUCLEOTIDE SEQUENCE [LARGE SCALE GENOMIC DNA]</scope>
    <source>
        <strain>JCSC1435</strain>
    </source>
</reference>
<comment type="function">
    <text evidence="1">Excises uracil residues from the DNA which can arise as a result of misincorporation of dUMP residues by DNA polymerase or due to deamination of cytosine.</text>
</comment>
<comment type="catalytic activity">
    <reaction evidence="1">
        <text>Hydrolyzes single-stranded DNA or mismatched double-stranded DNA and polynucleotides, releasing free uracil.</text>
        <dbReference type="EC" id="3.2.2.27"/>
    </reaction>
</comment>
<comment type="subcellular location">
    <subcellularLocation>
        <location evidence="1">Cytoplasm</location>
    </subcellularLocation>
</comment>
<comment type="similarity">
    <text evidence="1">Belongs to the uracil-DNA glycosylase (UDG) superfamily. UNG family.</text>
</comment>
<gene>
    <name evidence="1" type="primary">ung</name>
    <name type="ordered locus">SH2411</name>
</gene>
<feature type="chain" id="PRO_1000009947" description="Uracil-DNA glycosylase">
    <location>
        <begin position="1"/>
        <end position="219"/>
    </location>
</feature>
<feature type="active site" description="Proton acceptor" evidence="1">
    <location>
        <position position="59"/>
    </location>
</feature>
<keyword id="KW-0963">Cytoplasm</keyword>
<keyword id="KW-0227">DNA damage</keyword>
<keyword id="KW-0234">DNA repair</keyword>
<keyword id="KW-0378">Hydrolase</keyword>